<evidence type="ECO:0000250" key="1"/>
<evidence type="ECO:0000250" key="2">
    <source>
        <dbReference type="UniProtKB" id="P00157"/>
    </source>
</evidence>
<evidence type="ECO:0000255" key="3">
    <source>
        <dbReference type="PROSITE-ProRule" id="PRU00968"/>
    </source>
</evidence>
<organism>
    <name type="scientific">Microtus subterraneus</name>
    <name type="common">European pine vole</name>
    <name type="synonym">Terricola subterraneus</name>
    <dbReference type="NCBI Taxonomy" id="137712"/>
    <lineage>
        <taxon>Eukaryota</taxon>
        <taxon>Metazoa</taxon>
        <taxon>Chordata</taxon>
        <taxon>Craniata</taxon>
        <taxon>Vertebrata</taxon>
        <taxon>Euteleostomi</taxon>
        <taxon>Mammalia</taxon>
        <taxon>Eutheria</taxon>
        <taxon>Euarchontoglires</taxon>
        <taxon>Glires</taxon>
        <taxon>Rodentia</taxon>
        <taxon>Myomorpha</taxon>
        <taxon>Muroidea</taxon>
        <taxon>Cricetidae</taxon>
        <taxon>Arvicolinae</taxon>
        <taxon>Microtus</taxon>
    </lineage>
</organism>
<gene>
    <name type="primary">MT-CYB</name>
    <name type="synonym">COB</name>
    <name type="synonym">CYTB</name>
    <name type="synonym">MTCYB</name>
</gene>
<name>CYB_MICSB</name>
<reference key="1">
    <citation type="submission" date="1997-08" db="EMBL/GenBank/DDBJ databases">
        <title>Genetic analysis of Tula hantaviral sequences amplified from tissues of Pitymys subterraneus captured in the Cacak region of Serbia-Yugoslavia.</title>
        <authorList>
            <person name="Song J.-W."/>
            <person name="Gligic A."/>
            <person name="Yanagihara R."/>
        </authorList>
    </citation>
    <scope>NUCLEOTIDE SEQUENCE [GENOMIC DNA]</scope>
    <source>
        <strain>Isolate PSG45</strain>
    </source>
</reference>
<dbReference type="EMBL" id="AF017657">
    <property type="protein sequence ID" value="AAC29000.1"/>
    <property type="molecule type" value="Genomic_DNA"/>
</dbReference>
<dbReference type="SMR" id="O78761"/>
<dbReference type="GO" id="GO:0005743">
    <property type="term" value="C:mitochondrial inner membrane"/>
    <property type="evidence" value="ECO:0007669"/>
    <property type="project" value="UniProtKB-SubCell"/>
</dbReference>
<dbReference type="GO" id="GO:0046872">
    <property type="term" value="F:metal ion binding"/>
    <property type="evidence" value="ECO:0007669"/>
    <property type="project" value="UniProtKB-KW"/>
</dbReference>
<dbReference type="GO" id="GO:0008121">
    <property type="term" value="F:ubiquinol-cytochrome-c reductase activity"/>
    <property type="evidence" value="ECO:0007669"/>
    <property type="project" value="TreeGrafter"/>
</dbReference>
<dbReference type="GO" id="GO:0006122">
    <property type="term" value="P:mitochondrial electron transport, ubiquinol to cytochrome c"/>
    <property type="evidence" value="ECO:0007669"/>
    <property type="project" value="TreeGrafter"/>
</dbReference>
<dbReference type="CDD" id="cd00284">
    <property type="entry name" value="Cytochrome_b_N"/>
    <property type="match status" value="1"/>
</dbReference>
<dbReference type="Gene3D" id="1.20.810.10">
    <property type="entry name" value="Cytochrome Bc1 Complex, Chain C"/>
    <property type="match status" value="1"/>
</dbReference>
<dbReference type="InterPro" id="IPR005797">
    <property type="entry name" value="Cyt_b/b6_N"/>
</dbReference>
<dbReference type="InterPro" id="IPR027387">
    <property type="entry name" value="Cytb/b6-like_sf"/>
</dbReference>
<dbReference type="InterPro" id="IPR048259">
    <property type="entry name" value="Cytochrome_b_N_euk/bac"/>
</dbReference>
<dbReference type="InterPro" id="IPR016174">
    <property type="entry name" value="Di-haem_cyt_TM"/>
</dbReference>
<dbReference type="PANTHER" id="PTHR19271">
    <property type="entry name" value="CYTOCHROME B"/>
    <property type="match status" value="1"/>
</dbReference>
<dbReference type="PANTHER" id="PTHR19271:SF16">
    <property type="entry name" value="CYTOCHROME B"/>
    <property type="match status" value="1"/>
</dbReference>
<dbReference type="Pfam" id="PF00033">
    <property type="entry name" value="Cytochrome_B"/>
    <property type="match status" value="1"/>
</dbReference>
<dbReference type="SUPFAM" id="SSF81342">
    <property type="entry name" value="Transmembrane di-heme cytochromes"/>
    <property type="match status" value="1"/>
</dbReference>
<dbReference type="PROSITE" id="PS51002">
    <property type="entry name" value="CYTB_NTER"/>
    <property type="match status" value="1"/>
</dbReference>
<proteinExistence type="inferred from homology"/>
<feature type="chain" id="PRO_0000061405" description="Cytochrome b">
    <location>
        <begin position="1"/>
        <end position="134" status="greater than"/>
    </location>
</feature>
<feature type="transmembrane region" description="Helical" evidence="2">
    <location>
        <begin position="33"/>
        <end position="53"/>
    </location>
</feature>
<feature type="transmembrane region" description="Helical" evidence="2">
    <location>
        <begin position="77"/>
        <end position="98"/>
    </location>
</feature>
<feature type="transmembrane region" description="Helical" evidence="2">
    <location>
        <begin position="113"/>
        <end position="133"/>
    </location>
</feature>
<feature type="binding site" description="axial binding residue" evidence="2">
    <location>
        <position position="83"/>
    </location>
    <ligand>
        <name>heme b</name>
        <dbReference type="ChEBI" id="CHEBI:60344"/>
        <label>b562</label>
    </ligand>
    <ligandPart>
        <name>Fe</name>
        <dbReference type="ChEBI" id="CHEBI:18248"/>
    </ligandPart>
</feature>
<feature type="binding site" description="axial binding residue" evidence="2">
    <location>
        <position position="97"/>
    </location>
    <ligand>
        <name>heme b</name>
        <dbReference type="ChEBI" id="CHEBI:60344"/>
        <label>b566</label>
    </ligand>
    <ligandPart>
        <name>Fe</name>
        <dbReference type="ChEBI" id="CHEBI:18248"/>
    </ligandPart>
</feature>
<feature type="non-terminal residue">
    <location>
        <position position="134"/>
    </location>
</feature>
<keyword id="KW-0249">Electron transport</keyword>
<keyword id="KW-0349">Heme</keyword>
<keyword id="KW-0408">Iron</keyword>
<keyword id="KW-0472">Membrane</keyword>
<keyword id="KW-0479">Metal-binding</keyword>
<keyword id="KW-0496">Mitochondrion</keyword>
<keyword id="KW-0999">Mitochondrion inner membrane</keyword>
<keyword id="KW-0679">Respiratory chain</keyword>
<keyword id="KW-0812">Transmembrane</keyword>
<keyword id="KW-1133">Transmembrane helix</keyword>
<keyword id="KW-0813">Transport</keyword>
<keyword id="KW-0830">Ubiquinone</keyword>
<protein>
    <recommendedName>
        <fullName>Cytochrome b</fullName>
    </recommendedName>
    <alternativeName>
        <fullName>Complex III subunit 3</fullName>
    </alternativeName>
    <alternativeName>
        <fullName>Complex III subunit III</fullName>
    </alternativeName>
    <alternativeName>
        <fullName>Cytochrome b-c1 complex subunit 3</fullName>
    </alternativeName>
    <alternativeName>
        <fullName>Ubiquinol-cytochrome-c reductase complex cytochrome b subunit</fullName>
    </alternativeName>
</protein>
<comment type="function">
    <text evidence="2">Component of the ubiquinol-cytochrome c reductase complex (complex III or cytochrome b-c1 complex) that is part of the mitochondrial respiratory chain. The b-c1 complex mediates electron transfer from ubiquinol to cytochrome c. Contributes to the generation of a proton gradient across the mitochondrial membrane that is then used for ATP synthesis.</text>
</comment>
<comment type="cofactor">
    <cofactor evidence="2">
        <name>heme b</name>
        <dbReference type="ChEBI" id="CHEBI:60344"/>
    </cofactor>
    <text evidence="2">Binds 2 heme b groups non-covalently.</text>
</comment>
<comment type="subunit">
    <text evidence="2">The cytochrome bc1 complex contains 11 subunits: 3 respiratory subunits (MT-CYB, CYC1 and UQCRFS1), 2 core proteins (UQCRC1 and UQCRC2) and 6 low-molecular weight proteins (UQCRH/QCR6, UQCRB/QCR7, UQCRQ/QCR8, UQCR10/QCR9, UQCR11/QCR10 and a cleavage product of UQCRFS1). This cytochrome bc1 complex then forms a dimer.</text>
</comment>
<comment type="subcellular location">
    <subcellularLocation>
        <location evidence="2">Mitochondrion inner membrane</location>
        <topology evidence="2">Multi-pass membrane protein</topology>
    </subcellularLocation>
</comment>
<comment type="miscellaneous">
    <text evidence="1">Heme 1 (or BL or b562) is low-potential and absorbs at about 562 nm, and heme 2 (or BH or b566) is high-potential and absorbs at about 566 nm.</text>
</comment>
<comment type="similarity">
    <text evidence="3">Belongs to the cytochrome b family.</text>
</comment>
<comment type="caution">
    <text evidence="2">The full-length protein contains only eight transmembrane helices, not nine as predicted by bioinformatics tools.</text>
</comment>
<sequence>MTIIRKKHPLIKIINHSFIDLPTPSNISSWWNFGSLLGLCLAVQILTGLFLAMHYTSDTATAFSSVAHICRDVNYGWLIRYMHANGASMFFICLFLHVGRGVYYGSYNMIETWNMGIILLFAVMATAFMGYVLP</sequence>
<accession>O78761</accession>
<geneLocation type="mitochondrion"/>